<dbReference type="EC" id="3.4.11.4" evidence="1"/>
<dbReference type="EMBL" id="CP000950">
    <property type="protein sequence ID" value="ACA68005.1"/>
    <property type="molecule type" value="Genomic_DNA"/>
</dbReference>
<dbReference type="RefSeq" id="WP_012303981.1">
    <property type="nucleotide sequence ID" value="NZ_CP009792.1"/>
</dbReference>
<dbReference type="SMR" id="B1JI59"/>
<dbReference type="MEROPS" id="M20.003"/>
<dbReference type="KEGG" id="ypy:YPK_1712"/>
<dbReference type="PATRIC" id="fig|502800.11.peg.2377"/>
<dbReference type="GO" id="GO:0005829">
    <property type="term" value="C:cytosol"/>
    <property type="evidence" value="ECO:0007669"/>
    <property type="project" value="TreeGrafter"/>
</dbReference>
<dbReference type="GO" id="GO:0008237">
    <property type="term" value="F:metallopeptidase activity"/>
    <property type="evidence" value="ECO:0007669"/>
    <property type="project" value="UniProtKB-KW"/>
</dbReference>
<dbReference type="GO" id="GO:0045148">
    <property type="term" value="F:tripeptide aminopeptidase activity"/>
    <property type="evidence" value="ECO:0007669"/>
    <property type="project" value="UniProtKB-UniRule"/>
</dbReference>
<dbReference type="GO" id="GO:0008270">
    <property type="term" value="F:zinc ion binding"/>
    <property type="evidence" value="ECO:0007669"/>
    <property type="project" value="UniProtKB-UniRule"/>
</dbReference>
<dbReference type="GO" id="GO:0043171">
    <property type="term" value="P:peptide catabolic process"/>
    <property type="evidence" value="ECO:0007669"/>
    <property type="project" value="UniProtKB-UniRule"/>
</dbReference>
<dbReference type="GO" id="GO:0006508">
    <property type="term" value="P:proteolysis"/>
    <property type="evidence" value="ECO:0007669"/>
    <property type="project" value="UniProtKB-UniRule"/>
</dbReference>
<dbReference type="CDD" id="cd03892">
    <property type="entry name" value="M20_peptT"/>
    <property type="match status" value="1"/>
</dbReference>
<dbReference type="FunFam" id="3.30.70.360:FF:000002">
    <property type="entry name" value="Peptidase T"/>
    <property type="match status" value="1"/>
</dbReference>
<dbReference type="Gene3D" id="3.30.70.360">
    <property type="match status" value="1"/>
</dbReference>
<dbReference type="Gene3D" id="3.40.630.10">
    <property type="entry name" value="Zn peptidases"/>
    <property type="match status" value="1"/>
</dbReference>
<dbReference type="HAMAP" id="MF_00550">
    <property type="entry name" value="Aminopeptidase_M20"/>
    <property type="match status" value="1"/>
</dbReference>
<dbReference type="InterPro" id="IPR001261">
    <property type="entry name" value="ArgE/DapE_CS"/>
</dbReference>
<dbReference type="InterPro" id="IPR036264">
    <property type="entry name" value="Bact_exopeptidase_dim_dom"/>
</dbReference>
<dbReference type="InterPro" id="IPR002933">
    <property type="entry name" value="Peptidase_M20"/>
</dbReference>
<dbReference type="InterPro" id="IPR011650">
    <property type="entry name" value="Peptidase_M20_dimer"/>
</dbReference>
<dbReference type="InterPro" id="IPR010161">
    <property type="entry name" value="Peptidase_M20B"/>
</dbReference>
<dbReference type="NCBIfam" id="TIGR01882">
    <property type="entry name" value="peptidase-T"/>
    <property type="match status" value="1"/>
</dbReference>
<dbReference type="NCBIfam" id="NF003976">
    <property type="entry name" value="PRK05469.1"/>
    <property type="match status" value="1"/>
</dbReference>
<dbReference type="NCBIfam" id="NF009920">
    <property type="entry name" value="PRK13381.1"/>
    <property type="match status" value="1"/>
</dbReference>
<dbReference type="PANTHER" id="PTHR42994">
    <property type="entry name" value="PEPTIDASE T"/>
    <property type="match status" value="1"/>
</dbReference>
<dbReference type="PANTHER" id="PTHR42994:SF1">
    <property type="entry name" value="PEPTIDASE T"/>
    <property type="match status" value="1"/>
</dbReference>
<dbReference type="Pfam" id="PF07687">
    <property type="entry name" value="M20_dimer"/>
    <property type="match status" value="1"/>
</dbReference>
<dbReference type="Pfam" id="PF01546">
    <property type="entry name" value="Peptidase_M20"/>
    <property type="match status" value="1"/>
</dbReference>
<dbReference type="PIRSF" id="PIRSF037215">
    <property type="entry name" value="Peptidase_M20B"/>
    <property type="match status" value="1"/>
</dbReference>
<dbReference type="SUPFAM" id="SSF55031">
    <property type="entry name" value="Bacterial exopeptidase dimerisation domain"/>
    <property type="match status" value="1"/>
</dbReference>
<dbReference type="SUPFAM" id="SSF53187">
    <property type="entry name" value="Zn-dependent exopeptidases"/>
    <property type="match status" value="1"/>
</dbReference>
<dbReference type="PROSITE" id="PS00758">
    <property type="entry name" value="ARGE_DAPE_CPG2_1"/>
    <property type="match status" value="1"/>
</dbReference>
<dbReference type="PROSITE" id="PS00759">
    <property type="entry name" value="ARGE_DAPE_CPG2_2"/>
    <property type="match status" value="1"/>
</dbReference>
<name>PEPT_YERPY</name>
<reference key="1">
    <citation type="submission" date="2008-02" db="EMBL/GenBank/DDBJ databases">
        <title>Complete sequence of Yersinia pseudotuberculosis YPIII.</title>
        <authorList>
            <consortium name="US DOE Joint Genome Institute"/>
            <person name="Copeland A."/>
            <person name="Lucas S."/>
            <person name="Lapidus A."/>
            <person name="Glavina del Rio T."/>
            <person name="Dalin E."/>
            <person name="Tice H."/>
            <person name="Bruce D."/>
            <person name="Goodwin L."/>
            <person name="Pitluck S."/>
            <person name="Munk A.C."/>
            <person name="Brettin T."/>
            <person name="Detter J.C."/>
            <person name="Han C."/>
            <person name="Tapia R."/>
            <person name="Schmutz J."/>
            <person name="Larimer F."/>
            <person name="Land M."/>
            <person name="Hauser L."/>
            <person name="Challacombe J.F."/>
            <person name="Green L."/>
            <person name="Lindler L.E."/>
            <person name="Nikolich M.P."/>
            <person name="Richardson P."/>
        </authorList>
    </citation>
    <scope>NUCLEOTIDE SEQUENCE [LARGE SCALE GENOMIC DNA]</scope>
    <source>
        <strain>YPIII</strain>
    </source>
</reference>
<proteinExistence type="inferred from homology"/>
<protein>
    <recommendedName>
        <fullName evidence="1">Peptidase T</fullName>
        <ecNumber evidence="1">3.4.11.4</ecNumber>
    </recommendedName>
    <alternativeName>
        <fullName evidence="1">Aminotripeptidase</fullName>
        <shortName evidence="1">Tripeptidase</shortName>
    </alternativeName>
    <alternativeName>
        <fullName evidence="1">Tripeptide aminopeptidase</fullName>
    </alternativeName>
</protein>
<keyword id="KW-0031">Aminopeptidase</keyword>
<keyword id="KW-0963">Cytoplasm</keyword>
<keyword id="KW-0378">Hydrolase</keyword>
<keyword id="KW-0479">Metal-binding</keyword>
<keyword id="KW-0482">Metalloprotease</keyword>
<keyword id="KW-0645">Protease</keyword>
<keyword id="KW-0862">Zinc</keyword>
<gene>
    <name evidence="1" type="primary">pepT</name>
    <name type="ordered locus">YPK_1712</name>
</gene>
<organism>
    <name type="scientific">Yersinia pseudotuberculosis serotype O:3 (strain YPIII)</name>
    <dbReference type="NCBI Taxonomy" id="502800"/>
    <lineage>
        <taxon>Bacteria</taxon>
        <taxon>Pseudomonadati</taxon>
        <taxon>Pseudomonadota</taxon>
        <taxon>Gammaproteobacteria</taxon>
        <taxon>Enterobacterales</taxon>
        <taxon>Yersiniaceae</taxon>
        <taxon>Yersinia</taxon>
    </lineage>
</organism>
<feature type="chain" id="PRO_1000129061" description="Peptidase T">
    <location>
        <begin position="1"/>
        <end position="411"/>
    </location>
</feature>
<feature type="active site" evidence="1">
    <location>
        <position position="80"/>
    </location>
</feature>
<feature type="active site" description="Proton acceptor" evidence="1">
    <location>
        <position position="173"/>
    </location>
</feature>
<feature type="binding site" evidence="1">
    <location>
        <position position="78"/>
    </location>
    <ligand>
        <name>Zn(2+)</name>
        <dbReference type="ChEBI" id="CHEBI:29105"/>
        <label>1</label>
    </ligand>
</feature>
<feature type="binding site" evidence="1">
    <location>
        <position position="140"/>
    </location>
    <ligand>
        <name>Zn(2+)</name>
        <dbReference type="ChEBI" id="CHEBI:29105"/>
        <label>1</label>
    </ligand>
</feature>
<feature type="binding site" evidence="1">
    <location>
        <position position="140"/>
    </location>
    <ligand>
        <name>Zn(2+)</name>
        <dbReference type="ChEBI" id="CHEBI:29105"/>
        <label>2</label>
    </ligand>
</feature>
<feature type="binding site" evidence="1">
    <location>
        <position position="174"/>
    </location>
    <ligand>
        <name>Zn(2+)</name>
        <dbReference type="ChEBI" id="CHEBI:29105"/>
        <label>2</label>
    </ligand>
</feature>
<feature type="binding site" evidence="1">
    <location>
        <position position="196"/>
    </location>
    <ligand>
        <name>Zn(2+)</name>
        <dbReference type="ChEBI" id="CHEBI:29105"/>
        <label>1</label>
    </ligand>
</feature>
<feature type="binding site" evidence="1">
    <location>
        <position position="379"/>
    </location>
    <ligand>
        <name>Zn(2+)</name>
        <dbReference type="ChEBI" id="CHEBI:29105"/>
        <label>2</label>
    </ligand>
</feature>
<accession>B1JI59</accession>
<comment type="function">
    <text evidence="1">Cleaves the N-terminal amino acid of tripeptides.</text>
</comment>
<comment type="catalytic activity">
    <reaction evidence="1">
        <text>Release of the N-terminal residue from a tripeptide.</text>
        <dbReference type="EC" id="3.4.11.4"/>
    </reaction>
</comment>
<comment type="cofactor">
    <cofactor evidence="1">
        <name>Zn(2+)</name>
        <dbReference type="ChEBI" id="CHEBI:29105"/>
    </cofactor>
    <text evidence="1">Binds 2 Zn(2+) ions per subunit.</text>
</comment>
<comment type="subcellular location">
    <subcellularLocation>
        <location evidence="1">Cytoplasm</location>
    </subcellularLocation>
</comment>
<comment type="similarity">
    <text evidence="1">Belongs to the peptidase M20B family.</text>
</comment>
<sequence length="411" mass="45447">MDKLLDRFFNYVSFDTQAKANVKSVPSTQGQRKLAQALQQELLTLGFSHVTLSDHGCVMATLPANVSWPVPTIGFIAHLDTSPDFSGKNVNPQIVENYRGGDIALGIGDEVLSPVMFPVLHQLLGHTLITTDGKTLLGADDKAGIAEIITAMVRLKHRNVPHGDIRIAFTPDEEVGKGAQFFNVAEFDAQWAYTVDGGGIGELEFENFNAASVAIKIVGNNVHPGSAKGVMVNALSLATRYHQELPVDETPEYTEGYDGFYHLQSIKGTVERAEMHYIVRDFNRDSFEARKKNMVDIAKRVGKGLHRDCYIEIVIDDSYYNMREQIIKHPHIIELAQQAMLDCDITPIMKPIRGGTDGAQLSFKGLPCPNIFTGGYNYHGKHEFITLEGMEKAVAVIMRISELTAKRAKES</sequence>
<evidence type="ECO:0000255" key="1">
    <source>
        <dbReference type="HAMAP-Rule" id="MF_00550"/>
    </source>
</evidence>